<dbReference type="EMBL" id="CP001390">
    <property type="protein sequence ID" value="ACM21947.1"/>
    <property type="molecule type" value="Genomic_DNA"/>
</dbReference>
<dbReference type="RefSeq" id="WP_012648675.1">
    <property type="nucleotide sequence ID" value="NC_011979.1"/>
</dbReference>
<dbReference type="SMR" id="B9M6F9"/>
<dbReference type="STRING" id="316067.Geob_3606"/>
<dbReference type="KEGG" id="geo:Geob_3606"/>
<dbReference type="eggNOG" id="COG0200">
    <property type="taxonomic scope" value="Bacteria"/>
</dbReference>
<dbReference type="HOGENOM" id="CLU_055188_4_2_7"/>
<dbReference type="OrthoDB" id="9810293at2"/>
<dbReference type="Proteomes" id="UP000007721">
    <property type="component" value="Chromosome"/>
</dbReference>
<dbReference type="GO" id="GO:0022625">
    <property type="term" value="C:cytosolic large ribosomal subunit"/>
    <property type="evidence" value="ECO:0007669"/>
    <property type="project" value="TreeGrafter"/>
</dbReference>
<dbReference type="GO" id="GO:0019843">
    <property type="term" value="F:rRNA binding"/>
    <property type="evidence" value="ECO:0007669"/>
    <property type="project" value="UniProtKB-UniRule"/>
</dbReference>
<dbReference type="GO" id="GO:0003735">
    <property type="term" value="F:structural constituent of ribosome"/>
    <property type="evidence" value="ECO:0007669"/>
    <property type="project" value="InterPro"/>
</dbReference>
<dbReference type="GO" id="GO:0006412">
    <property type="term" value="P:translation"/>
    <property type="evidence" value="ECO:0007669"/>
    <property type="project" value="UniProtKB-UniRule"/>
</dbReference>
<dbReference type="Gene3D" id="3.100.10.10">
    <property type="match status" value="1"/>
</dbReference>
<dbReference type="HAMAP" id="MF_01341">
    <property type="entry name" value="Ribosomal_uL15"/>
    <property type="match status" value="1"/>
</dbReference>
<dbReference type="InterPro" id="IPR030878">
    <property type="entry name" value="Ribosomal_uL15"/>
</dbReference>
<dbReference type="InterPro" id="IPR021131">
    <property type="entry name" value="Ribosomal_uL15/eL18"/>
</dbReference>
<dbReference type="InterPro" id="IPR036227">
    <property type="entry name" value="Ribosomal_uL15/eL18_sf"/>
</dbReference>
<dbReference type="InterPro" id="IPR005749">
    <property type="entry name" value="Ribosomal_uL15_bac-type"/>
</dbReference>
<dbReference type="InterPro" id="IPR001196">
    <property type="entry name" value="Ribosomal_uL15_CS"/>
</dbReference>
<dbReference type="NCBIfam" id="TIGR01071">
    <property type="entry name" value="rplO_bact"/>
    <property type="match status" value="1"/>
</dbReference>
<dbReference type="PANTHER" id="PTHR12934">
    <property type="entry name" value="50S RIBOSOMAL PROTEIN L15"/>
    <property type="match status" value="1"/>
</dbReference>
<dbReference type="PANTHER" id="PTHR12934:SF11">
    <property type="entry name" value="LARGE RIBOSOMAL SUBUNIT PROTEIN UL15M"/>
    <property type="match status" value="1"/>
</dbReference>
<dbReference type="Pfam" id="PF00828">
    <property type="entry name" value="Ribosomal_L27A"/>
    <property type="match status" value="1"/>
</dbReference>
<dbReference type="SUPFAM" id="SSF52080">
    <property type="entry name" value="Ribosomal proteins L15p and L18e"/>
    <property type="match status" value="1"/>
</dbReference>
<dbReference type="PROSITE" id="PS00475">
    <property type="entry name" value="RIBOSOMAL_L15"/>
    <property type="match status" value="1"/>
</dbReference>
<keyword id="KW-1185">Reference proteome</keyword>
<keyword id="KW-0687">Ribonucleoprotein</keyword>
<keyword id="KW-0689">Ribosomal protein</keyword>
<keyword id="KW-0694">RNA-binding</keyword>
<keyword id="KW-0699">rRNA-binding</keyword>
<feature type="chain" id="PRO_1000166297" description="Large ribosomal subunit protein uL15">
    <location>
        <begin position="1"/>
        <end position="146"/>
    </location>
</feature>
<feature type="region of interest" description="Disordered" evidence="2">
    <location>
        <begin position="1"/>
        <end position="64"/>
    </location>
</feature>
<feature type="compositionally biased region" description="Basic residues" evidence="2">
    <location>
        <begin position="30"/>
        <end position="39"/>
    </location>
</feature>
<comment type="function">
    <text evidence="1">Binds to the 23S rRNA.</text>
</comment>
<comment type="subunit">
    <text evidence="1">Part of the 50S ribosomal subunit.</text>
</comment>
<comment type="similarity">
    <text evidence="1">Belongs to the universal ribosomal protein uL15 family.</text>
</comment>
<gene>
    <name evidence="1" type="primary">rplO</name>
    <name type="ordered locus">Geob_3606</name>
</gene>
<protein>
    <recommendedName>
        <fullName evidence="1">Large ribosomal subunit protein uL15</fullName>
    </recommendedName>
    <alternativeName>
        <fullName evidence="3">50S ribosomal protein L15</fullName>
    </alternativeName>
</protein>
<evidence type="ECO:0000255" key="1">
    <source>
        <dbReference type="HAMAP-Rule" id="MF_01341"/>
    </source>
</evidence>
<evidence type="ECO:0000256" key="2">
    <source>
        <dbReference type="SAM" id="MobiDB-lite"/>
    </source>
</evidence>
<evidence type="ECO:0000305" key="3"/>
<sequence>MELNSIKPAAGASKNRKRIGRGTGSGHGKTATKGHKGQKARSGGSVKAGFEGGQMPMHRRLPKRGFKPLSKKVYSVVNLSQLDAFEQGSCVDVEAMQKSGLVKDICDGIKILASGELTKSLTIKAHKFSAAARDKITSVGGTVEEI</sequence>
<accession>B9M6F9</accession>
<reference key="1">
    <citation type="submission" date="2009-01" db="EMBL/GenBank/DDBJ databases">
        <title>Complete sequence of Geobacter sp. FRC-32.</title>
        <authorList>
            <consortium name="US DOE Joint Genome Institute"/>
            <person name="Lucas S."/>
            <person name="Copeland A."/>
            <person name="Lapidus A."/>
            <person name="Glavina del Rio T."/>
            <person name="Dalin E."/>
            <person name="Tice H."/>
            <person name="Bruce D."/>
            <person name="Goodwin L."/>
            <person name="Pitluck S."/>
            <person name="Saunders E."/>
            <person name="Brettin T."/>
            <person name="Detter J.C."/>
            <person name="Han C."/>
            <person name="Larimer F."/>
            <person name="Land M."/>
            <person name="Hauser L."/>
            <person name="Kyrpides N."/>
            <person name="Ovchinnikova G."/>
            <person name="Kostka J."/>
            <person name="Richardson P."/>
        </authorList>
    </citation>
    <scope>NUCLEOTIDE SEQUENCE [LARGE SCALE GENOMIC DNA]</scope>
    <source>
        <strain>DSM 22248 / JCM 15807 / FRC-32</strain>
    </source>
</reference>
<name>RL15_GEODF</name>
<proteinExistence type="inferred from homology"/>
<organism>
    <name type="scientific">Geotalea daltonii (strain DSM 22248 / JCM 15807 / FRC-32)</name>
    <name type="common">Geobacter daltonii</name>
    <dbReference type="NCBI Taxonomy" id="316067"/>
    <lineage>
        <taxon>Bacteria</taxon>
        <taxon>Pseudomonadati</taxon>
        <taxon>Thermodesulfobacteriota</taxon>
        <taxon>Desulfuromonadia</taxon>
        <taxon>Geobacterales</taxon>
        <taxon>Geobacteraceae</taxon>
        <taxon>Geotalea</taxon>
    </lineage>
</organism>